<evidence type="ECO:0000255" key="1">
    <source>
        <dbReference type="HAMAP-Rule" id="MF_00050"/>
    </source>
</evidence>
<sequence>MAITAQMVKELREKTGAGMMDCKKALEENGGSLEKAVDWLRQKGLSKAAKKAGRATSEGVIGNYIHSTGKIAVLVEVKCETDFVARNEKFQEFAKNVAMQIAANNPAAVDAESVDPAIIEREREVYRQKAREEGKPENIIEKIVEGGIKKFYKEICLLEQPYIRDDKMTIRDLLNDVIATLGENVTIGRFVRMQLGAEEA</sequence>
<organism>
    <name type="scientific">Nitratidesulfovibrio vulgaris (strain DSM 19637 / Miyazaki F)</name>
    <name type="common">Desulfovibrio vulgaris</name>
    <dbReference type="NCBI Taxonomy" id="883"/>
    <lineage>
        <taxon>Bacteria</taxon>
        <taxon>Pseudomonadati</taxon>
        <taxon>Thermodesulfobacteriota</taxon>
        <taxon>Desulfovibrionia</taxon>
        <taxon>Desulfovibrionales</taxon>
        <taxon>Desulfovibrionaceae</taxon>
        <taxon>Nitratidesulfovibrio</taxon>
    </lineage>
</organism>
<protein>
    <recommendedName>
        <fullName evidence="1">Elongation factor Ts</fullName>
        <shortName evidence="1">EF-Ts</shortName>
    </recommendedName>
</protein>
<gene>
    <name evidence="1" type="primary">tsf</name>
    <name type="ordered locus">DvMF_2923</name>
</gene>
<keyword id="KW-0963">Cytoplasm</keyword>
<keyword id="KW-0251">Elongation factor</keyword>
<keyword id="KW-0648">Protein biosynthesis</keyword>
<name>EFTS_NITV9</name>
<reference key="1">
    <citation type="submission" date="2008-10" db="EMBL/GenBank/DDBJ databases">
        <title>Complete sequence of Desulfovibrio vulgaris str. 'Miyazaki F'.</title>
        <authorList>
            <person name="Lucas S."/>
            <person name="Copeland A."/>
            <person name="Lapidus A."/>
            <person name="Glavina del Rio T."/>
            <person name="Dalin E."/>
            <person name="Tice H."/>
            <person name="Bruce D."/>
            <person name="Goodwin L."/>
            <person name="Pitluck S."/>
            <person name="Sims D."/>
            <person name="Brettin T."/>
            <person name="Detter J.C."/>
            <person name="Han C."/>
            <person name="Larimer F."/>
            <person name="Land M."/>
            <person name="Hauser L."/>
            <person name="Kyrpides N."/>
            <person name="Mikhailova N."/>
            <person name="Hazen T.C."/>
            <person name="Richardson P."/>
        </authorList>
    </citation>
    <scope>NUCLEOTIDE SEQUENCE [LARGE SCALE GENOMIC DNA]</scope>
    <source>
        <strain>DSM 19637 / Miyazaki F</strain>
    </source>
</reference>
<comment type="function">
    <text evidence="1">Associates with the EF-Tu.GDP complex and induces the exchange of GDP to GTP. It remains bound to the aminoacyl-tRNA.EF-Tu.GTP complex up to the GTP hydrolysis stage on the ribosome.</text>
</comment>
<comment type="subcellular location">
    <subcellularLocation>
        <location evidence="1">Cytoplasm</location>
    </subcellularLocation>
</comment>
<comment type="similarity">
    <text evidence="1">Belongs to the EF-Ts family.</text>
</comment>
<proteinExistence type="inferred from homology"/>
<dbReference type="EMBL" id="CP001197">
    <property type="protein sequence ID" value="ACL09860.1"/>
    <property type="molecule type" value="Genomic_DNA"/>
</dbReference>
<dbReference type="SMR" id="B8DSA5"/>
<dbReference type="STRING" id="883.DvMF_2923"/>
<dbReference type="KEGG" id="dvm:DvMF_2923"/>
<dbReference type="eggNOG" id="COG0264">
    <property type="taxonomic scope" value="Bacteria"/>
</dbReference>
<dbReference type="HOGENOM" id="CLU_047155_1_1_7"/>
<dbReference type="OrthoDB" id="9808348at2"/>
<dbReference type="GO" id="GO:0005737">
    <property type="term" value="C:cytoplasm"/>
    <property type="evidence" value="ECO:0007669"/>
    <property type="project" value="UniProtKB-SubCell"/>
</dbReference>
<dbReference type="GO" id="GO:0003746">
    <property type="term" value="F:translation elongation factor activity"/>
    <property type="evidence" value="ECO:0007669"/>
    <property type="project" value="UniProtKB-UniRule"/>
</dbReference>
<dbReference type="CDD" id="cd14275">
    <property type="entry name" value="UBA_EF-Ts"/>
    <property type="match status" value="1"/>
</dbReference>
<dbReference type="FunFam" id="1.10.286.20:FF:000001">
    <property type="entry name" value="Elongation factor Ts"/>
    <property type="match status" value="1"/>
</dbReference>
<dbReference type="FunFam" id="1.10.8.10:FF:000001">
    <property type="entry name" value="Elongation factor Ts"/>
    <property type="match status" value="1"/>
</dbReference>
<dbReference type="Gene3D" id="1.10.286.20">
    <property type="match status" value="1"/>
</dbReference>
<dbReference type="Gene3D" id="1.10.8.10">
    <property type="entry name" value="DNA helicase RuvA subunit, C-terminal domain"/>
    <property type="match status" value="1"/>
</dbReference>
<dbReference type="Gene3D" id="3.30.479.20">
    <property type="entry name" value="Elongation factor Ts, dimerisation domain"/>
    <property type="match status" value="1"/>
</dbReference>
<dbReference type="HAMAP" id="MF_00050">
    <property type="entry name" value="EF_Ts"/>
    <property type="match status" value="1"/>
</dbReference>
<dbReference type="InterPro" id="IPR036402">
    <property type="entry name" value="EF-Ts_dimer_sf"/>
</dbReference>
<dbReference type="InterPro" id="IPR001816">
    <property type="entry name" value="Transl_elong_EFTs/EF1B"/>
</dbReference>
<dbReference type="InterPro" id="IPR014039">
    <property type="entry name" value="Transl_elong_EFTs/EF1B_dimer"/>
</dbReference>
<dbReference type="InterPro" id="IPR018101">
    <property type="entry name" value="Transl_elong_Ts_CS"/>
</dbReference>
<dbReference type="InterPro" id="IPR009060">
    <property type="entry name" value="UBA-like_sf"/>
</dbReference>
<dbReference type="NCBIfam" id="TIGR00116">
    <property type="entry name" value="tsf"/>
    <property type="match status" value="1"/>
</dbReference>
<dbReference type="PANTHER" id="PTHR11741">
    <property type="entry name" value="ELONGATION FACTOR TS"/>
    <property type="match status" value="1"/>
</dbReference>
<dbReference type="PANTHER" id="PTHR11741:SF0">
    <property type="entry name" value="ELONGATION FACTOR TS, MITOCHONDRIAL"/>
    <property type="match status" value="1"/>
</dbReference>
<dbReference type="Pfam" id="PF00889">
    <property type="entry name" value="EF_TS"/>
    <property type="match status" value="1"/>
</dbReference>
<dbReference type="SUPFAM" id="SSF54713">
    <property type="entry name" value="Elongation factor Ts (EF-Ts), dimerisation domain"/>
    <property type="match status" value="1"/>
</dbReference>
<dbReference type="SUPFAM" id="SSF46934">
    <property type="entry name" value="UBA-like"/>
    <property type="match status" value="1"/>
</dbReference>
<dbReference type="PROSITE" id="PS01126">
    <property type="entry name" value="EF_TS_1"/>
    <property type="match status" value="1"/>
</dbReference>
<dbReference type="PROSITE" id="PS01127">
    <property type="entry name" value="EF_TS_2"/>
    <property type="match status" value="1"/>
</dbReference>
<accession>B8DSA5</accession>
<feature type="chain" id="PRO_1000116725" description="Elongation factor Ts">
    <location>
        <begin position="1"/>
        <end position="200"/>
    </location>
</feature>
<feature type="region of interest" description="Involved in Mg(2+) ion dislocation from EF-Tu" evidence="1">
    <location>
        <begin position="81"/>
        <end position="84"/>
    </location>
</feature>